<accession>Q9A5C1</accession>
<dbReference type="EC" id="6.1.1.7" evidence="1"/>
<dbReference type="EMBL" id="AE005673">
    <property type="protein sequence ID" value="AAK24500.1"/>
    <property type="molecule type" value="Genomic_DNA"/>
</dbReference>
<dbReference type="PIR" id="H87562">
    <property type="entry name" value="H87562"/>
</dbReference>
<dbReference type="RefSeq" id="NP_421332.1">
    <property type="nucleotide sequence ID" value="NC_002696.2"/>
</dbReference>
<dbReference type="RefSeq" id="WP_010920386.1">
    <property type="nucleotide sequence ID" value="NC_002696.2"/>
</dbReference>
<dbReference type="SMR" id="Q9A5C1"/>
<dbReference type="STRING" id="190650.CC_2529"/>
<dbReference type="EnsemblBacteria" id="AAK24500">
    <property type="protein sequence ID" value="AAK24500"/>
    <property type="gene ID" value="CC_2529"/>
</dbReference>
<dbReference type="KEGG" id="ccr:CC_2529"/>
<dbReference type="PATRIC" id="fig|190650.5.peg.2543"/>
<dbReference type="eggNOG" id="COG0013">
    <property type="taxonomic scope" value="Bacteria"/>
</dbReference>
<dbReference type="HOGENOM" id="CLU_004485_1_1_5"/>
<dbReference type="BioCyc" id="CAULO:CC2529-MONOMER"/>
<dbReference type="Proteomes" id="UP000001816">
    <property type="component" value="Chromosome"/>
</dbReference>
<dbReference type="GO" id="GO:0005829">
    <property type="term" value="C:cytosol"/>
    <property type="evidence" value="ECO:0007669"/>
    <property type="project" value="TreeGrafter"/>
</dbReference>
<dbReference type="GO" id="GO:0004813">
    <property type="term" value="F:alanine-tRNA ligase activity"/>
    <property type="evidence" value="ECO:0007669"/>
    <property type="project" value="UniProtKB-UniRule"/>
</dbReference>
<dbReference type="GO" id="GO:0002161">
    <property type="term" value="F:aminoacyl-tRNA deacylase activity"/>
    <property type="evidence" value="ECO:0007669"/>
    <property type="project" value="TreeGrafter"/>
</dbReference>
<dbReference type="GO" id="GO:0005524">
    <property type="term" value="F:ATP binding"/>
    <property type="evidence" value="ECO:0007669"/>
    <property type="project" value="UniProtKB-UniRule"/>
</dbReference>
<dbReference type="GO" id="GO:0000049">
    <property type="term" value="F:tRNA binding"/>
    <property type="evidence" value="ECO:0007669"/>
    <property type="project" value="UniProtKB-KW"/>
</dbReference>
<dbReference type="GO" id="GO:0008270">
    <property type="term" value="F:zinc ion binding"/>
    <property type="evidence" value="ECO:0007669"/>
    <property type="project" value="UniProtKB-UniRule"/>
</dbReference>
<dbReference type="GO" id="GO:0006419">
    <property type="term" value="P:alanyl-tRNA aminoacylation"/>
    <property type="evidence" value="ECO:0007669"/>
    <property type="project" value="UniProtKB-UniRule"/>
</dbReference>
<dbReference type="GO" id="GO:0045892">
    <property type="term" value="P:negative regulation of DNA-templated transcription"/>
    <property type="evidence" value="ECO:0007669"/>
    <property type="project" value="TreeGrafter"/>
</dbReference>
<dbReference type="CDD" id="cd00673">
    <property type="entry name" value="AlaRS_core"/>
    <property type="match status" value="1"/>
</dbReference>
<dbReference type="FunFam" id="2.40.30.130:FF:000001">
    <property type="entry name" value="Alanine--tRNA ligase"/>
    <property type="match status" value="1"/>
</dbReference>
<dbReference type="FunFam" id="3.10.310.40:FF:000001">
    <property type="entry name" value="Alanine--tRNA ligase"/>
    <property type="match status" value="1"/>
</dbReference>
<dbReference type="FunFam" id="3.30.54.20:FF:000001">
    <property type="entry name" value="Alanine--tRNA ligase"/>
    <property type="match status" value="1"/>
</dbReference>
<dbReference type="FunFam" id="3.30.930.10:FF:000004">
    <property type="entry name" value="Alanine--tRNA ligase"/>
    <property type="match status" value="1"/>
</dbReference>
<dbReference type="FunFam" id="3.30.980.10:FF:000004">
    <property type="entry name" value="Alanine--tRNA ligase, cytoplasmic"/>
    <property type="match status" value="1"/>
</dbReference>
<dbReference type="Gene3D" id="2.40.30.130">
    <property type="match status" value="1"/>
</dbReference>
<dbReference type="Gene3D" id="3.10.310.40">
    <property type="match status" value="1"/>
</dbReference>
<dbReference type="Gene3D" id="3.30.54.20">
    <property type="match status" value="1"/>
</dbReference>
<dbReference type="Gene3D" id="6.10.250.550">
    <property type="match status" value="1"/>
</dbReference>
<dbReference type="Gene3D" id="3.30.930.10">
    <property type="entry name" value="Bira Bifunctional Protein, Domain 2"/>
    <property type="match status" value="1"/>
</dbReference>
<dbReference type="Gene3D" id="3.30.980.10">
    <property type="entry name" value="Threonyl-trna Synthetase, Chain A, domain 2"/>
    <property type="match status" value="1"/>
</dbReference>
<dbReference type="HAMAP" id="MF_00036_B">
    <property type="entry name" value="Ala_tRNA_synth_B"/>
    <property type="match status" value="1"/>
</dbReference>
<dbReference type="InterPro" id="IPR045864">
    <property type="entry name" value="aa-tRNA-synth_II/BPL/LPL"/>
</dbReference>
<dbReference type="InterPro" id="IPR002318">
    <property type="entry name" value="Ala-tRNA-lgiase_IIc"/>
</dbReference>
<dbReference type="InterPro" id="IPR018162">
    <property type="entry name" value="Ala-tRNA-ligase_IIc_anticod-bd"/>
</dbReference>
<dbReference type="InterPro" id="IPR018165">
    <property type="entry name" value="Ala-tRNA-synth_IIc_core"/>
</dbReference>
<dbReference type="InterPro" id="IPR018164">
    <property type="entry name" value="Ala-tRNA-synth_IIc_N"/>
</dbReference>
<dbReference type="InterPro" id="IPR050058">
    <property type="entry name" value="Ala-tRNA_ligase"/>
</dbReference>
<dbReference type="InterPro" id="IPR023033">
    <property type="entry name" value="Ala_tRNA_ligase_euk/bac"/>
</dbReference>
<dbReference type="InterPro" id="IPR003156">
    <property type="entry name" value="DHHA1_dom"/>
</dbReference>
<dbReference type="InterPro" id="IPR018163">
    <property type="entry name" value="Thr/Ala-tRNA-synth_IIc_edit"/>
</dbReference>
<dbReference type="InterPro" id="IPR009000">
    <property type="entry name" value="Transl_B-barrel_sf"/>
</dbReference>
<dbReference type="InterPro" id="IPR012947">
    <property type="entry name" value="tRNA_SAD"/>
</dbReference>
<dbReference type="NCBIfam" id="TIGR00344">
    <property type="entry name" value="alaS"/>
    <property type="match status" value="1"/>
</dbReference>
<dbReference type="PANTHER" id="PTHR11777:SF9">
    <property type="entry name" value="ALANINE--TRNA LIGASE, CYTOPLASMIC"/>
    <property type="match status" value="1"/>
</dbReference>
<dbReference type="PANTHER" id="PTHR11777">
    <property type="entry name" value="ALANYL-TRNA SYNTHETASE"/>
    <property type="match status" value="1"/>
</dbReference>
<dbReference type="Pfam" id="PF02272">
    <property type="entry name" value="DHHA1"/>
    <property type="match status" value="1"/>
</dbReference>
<dbReference type="Pfam" id="PF01411">
    <property type="entry name" value="tRNA-synt_2c"/>
    <property type="match status" value="1"/>
</dbReference>
<dbReference type="Pfam" id="PF07973">
    <property type="entry name" value="tRNA_SAD"/>
    <property type="match status" value="1"/>
</dbReference>
<dbReference type="PRINTS" id="PR00980">
    <property type="entry name" value="TRNASYNTHALA"/>
</dbReference>
<dbReference type="SMART" id="SM00863">
    <property type="entry name" value="tRNA_SAD"/>
    <property type="match status" value="1"/>
</dbReference>
<dbReference type="SUPFAM" id="SSF55681">
    <property type="entry name" value="Class II aaRS and biotin synthetases"/>
    <property type="match status" value="1"/>
</dbReference>
<dbReference type="SUPFAM" id="SSF101353">
    <property type="entry name" value="Putative anticodon-binding domain of alanyl-tRNA synthetase (AlaRS)"/>
    <property type="match status" value="1"/>
</dbReference>
<dbReference type="SUPFAM" id="SSF55186">
    <property type="entry name" value="ThrRS/AlaRS common domain"/>
    <property type="match status" value="1"/>
</dbReference>
<dbReference type="SUPFAM" id="SSF50447">
    <property type="entry name" value="Translation proteins"/>
    <property type="match status" value="1"/>
</dbReference>
<dbReference type="PROSITE" id="PS50860">
    <property type="entry name" value="AA_TRNA_LIGASE_II_ALA"/>
    <property type="match status" value="1"/>
</dbReference>
<reference key="1">
    <citation type="journal article" date="2001" name="Proc. Natl. Acad. Sci. U.S.A.">
        <title>Complete genome sequence of Caulobacter crescentus.</title>
        <authorList>
            <person name="Nierman W.C."/>
            <person name="Feldblyum T.V."/>
            <person name="Laub M.T."/>
            <person name="Paulsen I.T."/>
            <person name="Nelson K.E."/>
            <person name="Eisen J.A."/>
            <person name="Heidelberg J.F."/>
            <person name="Alley M.R.K."/>
            <person name="Ohta N."/>
            <person name="Maddock J.R."/>
            <person name="Potocka I."/>
            <person name="Nelson W.C."/>
            <person name="Newton A."/>
            <person name="Stephens C."/>
            <person name="Phadke N.D."/>
            <person name="Ely B."/>
            <person name="DeBoy R.T."/>
            <person name="Dodson R.J."/>
            <person name="Durkin A.S."/>
            <person name="Gwinn M.L."/>
            <person name="Haft D.H."/>
            <person name="Kolonay J.F."/>
            <person name="Smit J."/>
            <person name="Craven M.B."/>
            <person name="Khouri H.M."/>
            <person name="Shetty J."/>
            <person name="Berry K.J."/>
            <person name="Utterback T.R."/>
            <person name="Tran K."/>
            <person name="Wolf A.M."/>
            <person name="Vamathevan J.J."/>
            <person name="Ermolaeva M.D."/>
            <person name="White O."/>
            <person name="Salzberg S.L."/>
            <person name="Venter J.C."/>
            <person name="Shapiro L."/>
            <person name="Fraser C.M."/>
        </authorList>
    </citation>
    <scope>NUCLEOTIDE SEQUENCE [LARGE SCALE GENOMIC DNA]</scope>
    <source>
        <strain>ATCC 19089 / CIP 103742 / CB 15</strain>
    </source>
</reference>
<sequence length="880" mass="93643">MPSLNEIRSTFLDYFGKADHAVTPSAPLVPQNDPTLLFVNAGMVPFKNVFTGAETPAHPRAASSQKCVRAGGKHNDLDNVGYTARHHTFFEMLGNFSFGDYFKEQAILHAWTLLTAEFKLPKDKLLVTVYHTDDEAADLWKKIAGLGDDRIIRIPTSDNFWSMGDTGPCGPCSEIFFDHGPHIAGGPPGSPDEDGDRFIEIWNLVFMQFEQLAGGERISLPKPSIDTGMGLERIAAVLQGQHDNYDIDLFKALIAASVELTGVKAEGAQAPSHRVIADHLRSSSFLLADGVSPSNEGRGYVLRRIMRRAMRHAYLLGASEPLMHRLAPTLVREMGQAYPELRRAEALIVETLRQEEERFRTTLGRGMGLLDEATANLAAGGVLDGETAFKLYDTYGFPLDLTQDAVRAKGLTVDTDAFDAAMQKQREMARANWAGSGQQGAAAAWFSIKEKAGATDFVGYETTETTGVVKAIVVDGAEVESASAGQTVEVLLDRTSFYAESGGQAGDTGVIEAHGRESRVLDTQKQAGELHVHRVELASDLKVGDQVVASVDADRRNTTRSNHSAAHLVHAALHHVLGPHVAQKGQMVDGERMRFDFSHGGPLTAEELDRIEAEVNEVIRQNVPAETKEMAPQEAIEAGAVALFGEKYGDSVRVLTLGKSLADEAKAYSVELCGGTHVARTGDIALFKIVSEQGVAAGVRRIEALTGEAARRFLLDQAGVAKALADQFKTPVAEVATRVDALIADRKRLEKELAEAKKQLALGGGGAASGPEDVNGTALIARVLDGVGGKELRGVAEEFKKQLASGVVALVGTSDGKAAVTVAVTADLTGKFSAADLAKAAVIAMGGQGAGGKADFAQGGAPDDSKAEEGLAAVKALLAG</sequence>
<name>SYA_CAUVC</name>
<gene>
    <name evidence="1" type="primary">alaS</name>
    <name type="ordered locus">CC_2529</name>
</gene>
<proteinExistence type="inferred from homology"/>
<evidence type="ECO:0000255" key="1">
    <source>
        <dbReference type="HAMAP-Rule" id="MF_00036"/>
    </source>
</evidence>
<protein>
    <recommendedName>
        <fullName evidence="1">Alanine--tRNA ligase</fullName>
        <ecNumber evidence="1">6.1.1.7</ecNumber>
    </recommendedName>
    <alternativeName>
        <fullName evidence="1">Alanyl-tRNA synthetase</fullName>
        <shortName evidence="1">AlaRS</shortName>
    </alternativeName>
</protein>
<keyword id="KW-0030">Aminoacyl-tRNA synthetase</keyword>
<keyword id="KW-0067">ATP-binding</keyword>
<keyword id="KW-0963">Cytoplasm</keyword>
<keyword id="KW-0436">Ligase</keyword>
<keyword id="KW-0479">Metal-binding</keyword>
<keyword id="KW-0547">Nucleotide-binding</keyword>
<keyword id="KW-0648">Protein biosynthesis</keyword>
<keyword id="KW-1185">Reference proteome</keyword>
<keyword id="KW-0694">RNA-binding</keyword>
<keyword id="KW-0820">tRNA-binding</keyword>
<keyword id="KW-0862">Zinc</keyword>
<organism>
    <name type="scientific">Caulobacter vibrioides (strain ATCC 19089 / CIP 103742 / CB 15)</name>
    <name type="common">Caulobacter crescentus</name>
    <dbReference type="NCBI Taxonomy" id="190650"/>
    <lineage>
        <taxon>Bacteria</taxon>
        <taxon>Pseudomonadati</taxon>
        <taxon>Pseudomonadota</taxon>
        <taxon>Alphaproteobacteria</taxon>
        <taxon>Caulobacterales</taxon>
        <taxon>Caulobacteraceae</taxon>
        <taxon>Caulobacter</taxon>
    </lineage>
</organism>
<feature type="chain" id="PRO_0000075085" description="Alanine--tRNA ligase">
    <location>
        <begin position="1"/>
        <end position="880"/>
    </location>
</feature>
<feature type="binding site" evidence="1">
    <location>
        <position position="563"/>
    </location>
    <ligand>
        <name>Zn(2+)</name>
        <dbReference type="ChEBI" id="CHEBI:29105"/>
    </ligand>
</feature>
<feature type="binding site" evidence="1">
    <location>
        <position position="567"/>
    </location>
    <ligand>
        <name>Zn(2+)</name>
        <dbReference type="ChEBI" id="CHEBI:29105"/>
    </ligand>
</feature>
<feature type="binding site" evidence="1">
    <location>
        <position position="673"/>
    </location>
    <ligand>
        <name>Zn(2+)</name>
        <dbReference type="ChEBI" id="CHEBI:29105"/>
    </ligand>
</feature>
<feature type="binding site" evidence="1">
    <location>
        <position position="677"/>
    </location>
    <ligand>
        <name>Zn(2+)</name>
        <dbReference type="ChEBI" id="CHEBI:29105"/>
    </ligand>
</feature>
<comment type="function">
    <text evidence="1">Catalyzes the attachment of alanine to tRNA(Ala) in a two-step reaction: alanine is first activated by ATP to form Ala-AMP and then transferred to the acceptor end of tRNA(Ala). Also edits incorrectly charged Ser-tRNA(Ala) and Gly-tRNA(Ala) via its editing domain.</text>
</comment>
<comment type="catalytic activity">
    <reaction evidence="1">
        <text>tRNA(Ala) + L-alanine + ATP = L-alanyl-tRNA(Ala) + AMP + diphosphate</text>
        <dbReference type="Rhea" id="RHEA:12540"/>
        <dbReference type="Rhea" id="RHEA-COMP:9657"/>
        <dbReference type="Rhea" id="RHEA-COMP:9923"/>
        <dbReference type="ChEBI" id="CHEBI:30616"/>
        <dbReference type="ChEBI" id="CHEBI:33019"/>
        <dbReference type="ChEBI" id="CHEBI:57972"/>
        <dbReference type="ChEBI" id="CHEBI:78442"/>
        <dbReference type="ChEBI" id="CHEBI:78497"/>
        <dbReference type="ChEBI" id="CHEBI:456215"/>
        <dbReference type="EC" id="6.1.1.7"/>
    </reaction>
</comment>
<comment type="cofactor">
    <cofactor evidence="1">
        <name>Zn(2+)</name>
        <dbReference type="ChEBI" id="CHEBI:29105"/>
    </cofactor>
    <text evidence="1">Binds 1 zinc ion per subunit.</text>
</comment>
<comment type="subcellular location">
    <subcellularLocation>
        <location evidence="1">Cytoplasm</location>
    </subcellularLocation>
</comment>
<comment type="domain">
    <text evidence="1">Consists of three domains; the N-terminal catalytic domain, the editing domain and the C-terminal C-Ala domain. The editing domain removes incorrectly charged amino acids, while the C-Ala domain, along with tRNA(Ala), serves as a bridge to cooperatively bring together the editing and aminoacylation centers thus stimulating deacylation of misacylated tRNAs.</text>
</comment>
<comment type="similarity">
    <text evidence="1">Belongs to the class-II aminoacyl-tRNA synthetase family.</text>
</comment>